<feature type="chain" id="PRO_0000212731" description="Disease resistance protein RFL1">
    <location>
        <begin position="1"/>
        <end position="885"/>
    </location>
</feature>
<feature type="domain" description="NB-ARC">
    <location>
        <begin position="141"/>
        <end position="443"/>
    </location>
</feature>
<feature type="repeat" description="LRR 1">
    <location>
        <begin position="517"/>
        <end position="538"/>
    </location>
</feature>
<feature type="repeat" description="LRR 2">
    <location>
        <begin position="539"/>
        <end position="561"/>
    </location>
</feature>
<feature type="repeat" description="LRR 3">
    <location>
        <begin position="564"/>
        <end position="586"/>
    </location>
</feature>
<feature type="repeat" description="LRR 4">
    <location>
        <begin position="588"/>
        <end position="610"/>
    </location>
</feature>
<feature type="repeat" description="LRR 5">
    <location>
        <begin position="611"/>
        <end position="633"/>
    </location>
</feature>
<feature type="repeat" description="LRR 6">
    <location>
        <begin position="634"/>
        <end position="655"/>
    </location>
</feature>
<feature type="repeat" description="LRR 7">
    <location>
        <begin position="657"/>
        <end position="679"/>
    </location>
</feature>
<feature type="coiled-coil region" evidence="2">
    <location>
        <begin position="27"/>
        <end position="61"/>
    </location>
</feature>
<feature type="binding site" evidence="2">
    <location>
        <begin position="183"/>
        <end position="190"/>
    </location>
    <ligand>
        <name>ATP</name>
        <dbReference type="ChEBI" id="CHEBI:30616"/>
    </ligand>
</feature>
<feature type="sequence variant" description="In strain: cv. Cvi-0, cv. Kas-0, cv. Landsberg erecta and cv. Mt-0.">
    <original>E</original>
    <variation>V</variation>
    <location>
        <position position="14"/>
    </location>
</feature>
<feature type="sequence variant" description="In strain: cv. Ang-0, cv. Bla-1, cv. Bur-0, cv. Ct-1, cv. Cvi-0, cv. Kas-0, cv. Landsberg erecta, cv. Mt-0, cv. Pog-0, cv. Tamm-17, cv. Tsu-0, cv. Wu-0.">
    <original>N</original>
    <variation>K</variation>
    <location>
        <position position="47"/>
    </location>
</feature>
<feature type="sequence variant" description="In strain: cv. Bur-0.">
    <original>I</original>
    <variation>V</variation>
    <location>
        <position position="57"/>
    </location>
</feature>
<feature type="sequence variant" description="In strain: cv. Cvi-0, cv. Kas-0, cv. Landsberg erecta and cv. Mt-0.">
    <original>S</original>
    <variation>I</variation>
    <location>
        <position position="91"/>
    </location>
</feature>
<feature type="sequence variant" description="In strain: cv. Cvi-0, cv. Kas-0, cv. Landsberg erecta and cv. Mt-0.">
    <original>N</original>
    <variation>H</variation>
    <location>
        <position position="94"/>
    </location>
</feature>
<feature type="sequence variant" description="In strain: cv. Cvi-0, cv. Kas-0, cv. Landsberg erecta and cv. Mt-0.">
    <original>M</original>
    <variation>R</variation>
    <location>
        <position position="112"/>
    </location>
</feature>
<feature type="sequence variant" description="In strain: cv. Cvi-0, cv. Kas-0, cv. Landsberg erecta and cv. Mt-0.">
    <original>V</original>
    <variation>E</variation>
    <location>
        <position position="135"/>
    </location>
</feature>
<feature type="sequence variant" description="In strain: cv. Cvi-0, cv. Kas-0, cv. Landsberg erecta and cv. Mt-0.">
    <original>I</original>
    <variation>V</variation>
    <location>
        <position position="138"/>
    </location>
</feature>
<feature type="sequence variant" description="In strain: cv. Cvi-0, cv. Kas-0, cv. Landsberg erecta and cv. Mt-0.">
    <original>A</original>
    <variation>T</variation>
    <location>
        <position position="143"/>
    </location>
</feature>
<feature type="sequence variant" description="In strain: cv. Bur-0.">
    <original>D</original>
    <variation>N</variation>
    <location>
        <position position="165"/>
    </location>
</feature>
<feature type="sequence variant" description="In strain: cv. Cvi-0, cv. Kas-0, cv. Landsberg erecta and cv. Mt-0.">
    <original>K</original>
    <variation>R</variation>
    <location>
        <position position="226"/>
    </location>
</feature>
<feature type="sequence variant" description="In strain: cv. Bur-0.">
    <original>V</original>
    <variation>A</variation>
    <location>
        <position position="275"/>
    </location>
</feature>
<feature type="sequence variant" description="In strain: cv. Cvi-0, cv. Kas-0, cv. Landsberg erecta and cv. Mt-0.">
    <original>YPSG</original>
    <variation>FPNR</variation>
    <location>
        <begin position="280"/>
        <end position="283"/>
    </location>
</feature>
<feature type="sequence variant" description="In strain: cv. Ang-0 and cv. Tsu-0.">
    <original>P</original>
    <variation>S</variation>
    <location>
        <position position="281"/>
    </location>
</feature>
<feature type="sequence variant" description="In strain: cv. Cvi-0, cv. Kas-0, cv. Landsberg erecta and cv. Mt-0.">
    <original>V</original>
    <variation>I</variation>
    <location>
        <position position="289"/>
    </location>
</feature>
<feature type="sequence variant" description="In strain: cv. Ang-0, cv. Bla-1, cv. Bur-0, cv. Ct-1, cv. Cvi-0, cv. Kas-0, cv. Landsberg erecta, cv. Mt-0, cv. Pog-0, cv. Tamm-17, cv. Tsu-0, cv. Wu-0.">
    <original>H</original>
    <variation>R</variation>
    <location>
        <position position="294"/>
    </location>
</feature>
<feature type="sequence variant" description="In strain: cv. Cvi-0, cv. Kas-0, cv. Landsberg erecta and cv. Mt-0.">
    <original>N</original>
    <variation>D</variation>
    <location>
        <position position="306"/>
    </location>
</feature>
<feature type="sequence variant" description="In strain: cv. Cvi-0, cv. Kas-0, cv. Landsberg erecta and cv. Mt-0.">
    <original>I</original>
    <variation>V</variation>
    <location>
        <position position="310"/>
    </location>
</feature>
<feature type="sequence variant" description="In strain: cv. Cvi-0, cv. Kas-0, cv. Landsberg erecta and cv. Mt-0.">
    <original>R</original>
    <variation>C</variation>
    <location>
        <position position="342"/>
    </location>
</feature>
<feature type="sequence variant" description="In strain: cv. Cvi-0, cv. Kas-0, cv. Landsberg erecta and cv. Mt-0.">
    <original>C</original>
    <variation>R</variation>
    <location>
        <position position="349"/>
    </location>
</feature>
<feature type="sequence variant" description="In strain: cv. Cvi-0, cv. Kas-0, cv. Landsberg erecta and cv. Mt-0.">
    <original>S</original>
    <variation>SS</variation>
    <location>
        <position position="380"/>
    </location>
</feature>
<feature type="sequence variant" description="In strain: cv. Wu-0.">
    <original>I</original>
    <variation>L</variation>
    <location>
        <position position="394"/>
    </location>
</feature>
<feature type="sequence variant" description="In strain: cv. Cvi-0, cv. Kas-0, cv. Landsberg erecta and cv. Mt-0.">
    <original>A</original>
    <variation>V</variation>
    <location>
        <position position="407"/>
    </location>
</feature>
<feature type="sequence variant" description="In strain: cv. Ct-1 and cv. Tamm-17.">
    <original>E</original>
    <variation>D</variation>
    <location>
        <position position="419"/>
    </location>
</feature>
<feature type="sequence variant" description="In strain: cv. Bur-0.">
    <original>E</original>
    <variation>K</variation>
    <location>
        <position position="435"/>
    </location>
</feature>
<feature type="sequence variant" description="In strain: cv. Cvi-0, cv. Kas-0, cv. Landsberg erecta and cv. Mt-0.">
    <original>A</original>
    <variation>T</variation>
    <location>
        <position position="468"/>
    </location>
</feature>
<feature type="sequence variant" description="In strain: cv. Cvi-0, cv. Kas-0, cv. Landsberg erecta and cv. Mt-0.">
    <original>V</original>
    <variation>F</variation>
    <location>
        <position position="473"/>
    </location>
</feature>
<feature type="sequence variant" description="In strain: cv. Ang-0,, cv. Bla-1, cv. Bur-0, cv. Ct-1, cv. Cvi-0, cv. Kas-0, cv. Landsberg erecta, cv. Mt-0, cv. Pog-0, cv. Tamm-17, cv. Tsu-0, cv. Wu-0.">
    <original>M</original>
    <variation>V</variation>
    <location>
        <position position="479"/>
    </location>
</feature>
<feature type="sequence variant" description="In strain: cv. Cvi-0, cv. Kas-0, cv. Landsberg erecta and cv. Mt-0.">
    <original>F</original>
    <variation>S</variation>
    <location>
        <position position="488"/>
    </location>
</feature>
<feature type="sequence variant" description="In strain: cv. Cvi-0, cv. Kas-0, cv. Landsberg erecta and cv. Mt-0.">
    <original>E</original>
    <variation>K</variation>
    <location>
        <position position="511"/>
    </location>
</feature>
<feature type="sequence variant" description="In strain: cv. Cvi-0, cv. Kas-0, cv. Landsberg erecta and cv. Mt-0.">
    <original>N</original>
    <variation>D</variation>
    <location>
        <position position="527"/>
    </location>
</feature>
<feature type="sequence variant" description="In strain: cv. Cvi-0, cv. Kas-0, cv. Landsberg erecta and cv. Mt-0.">
    <original>L</original>
    <variation>F</variation>
    <location>
        <position position="532"/>
    </location>
</feature>
<feature type="sequence variant" description="In strain: cv. Bla-1, cv. Bur-0, cv. Cvi, cv. Kas-0, cv. Landsberg erecta, cv. Mt-0 and cv. Wu-0.">
    <original>H</original>
    <variation>Q</variation>
    <location>
        <position position="607"/>
    </location>
</feature>
<feature type="sequence variant" description="In strain: cv. Wu-0.">
    <original>L</original>
    <variation>R</variation>
    <location>
        <position position="640"/>
    </location>
</feature>
<feature type="sequence variant" description="In strain: cv. Cvi-0, cv. Kas-0, cv. Landsberg erecta and cv. Mt-0.">
    <original>V</original>
    <variation>I</variation>
    <location>
        <position position="702"/>
    </location>
</feature>
<feature type="sequence variant" description="In strain: cv. Cvi-0, cv. Kas-0, cv. Landsberg erecta and cv. Mt-0.">
    <original>H</original>
    <variation>T</variation>
    <location>
        <position position="711"/>
    </location>
</feature>
<feature type="sequence variant" description="In strain: cv. Cvi-0, cv. Kas-0, cv. Landsberg erecta and cv. Mt-0.">
    <original>W</original>
    <variation>C</variation>
    <location>
        <position position="724"/>
    </location>
</feature>
<feature type="sequence variant" description="In strain: cv. Cvi-0, cv. Kas-0, cv. Landsberg erecta and cv. Mt-0.">
    <original>K</original>
    <variation>KK</variation>
    <location>
        <position position="730"/>
    </location>
</feature>
<feature type="sequence variant" description="In strain: cv. Cvi-0, cv. Kas-0, cv. Landsberg erecta and cv. Mt-0.">
    <original>K</original>
    <variation>N</variation>
    <location>
        <position position="734"/>
    </location>
</feature>
<feature type="sequence variant" description="In strain: cv. Cvi-0, cv. Kas-0, cv. Landsberg erecta and cv. Mt-0.">
    <original>N</original>
    <variation>S</variation>
    <location>
        <position position="739"/>
    </location>
</feature>
<feature type="sequence variant" description="In strain: cv. Cvi-0, cv. Kas-0, cv. Landsberg erecta and cv. Mt-0.">
    <original>I</original>
    <variation>L</variation>
    <location>
        <position position="782"/>
    </location>
</feature>
<feature type="sequence variant" description="In strain: cv. Cvi-0, cv. Kas-0, cv. Landsberg erecta and cv. Mt-0.">
    <original>A</original>
    <variation>V</variation>
    <location>
        <position position="789"/>
    </location>
</feature>
<feature type="sequence variant" description="In strain: cv. Cvi-0, cv. Kas-0, cv. Landsberg erecta and cv. Mt-0.">
    <original>Q</original>
    <variation>A</variation>
    <location>
        <position position="800"/>
    </location>
</feature>
<feature type="sequence variant" description="In strain: cv. Bla-1 and cv. Bur-0.">
    <original>K</original>
    <variation>T</variation>
    <location>
        <position position="846"/>
    </location>
</feature>
<feature type="sequence variant" description="In strain: cv. Cvi-0 and cv. Mt-0.">
    <original>SVVKVEEFV</original>
    <variation>VLSKLKNLS</variation>
    <location>
        <begin position="847"/>
        <end position="855"/>
    </location>
</feature>
<feature type="sequence variant" description="In strain: cv. Kas-0 and cv. Landsberg erecta.">
    <original>QY</original>
    <variation>RH</variation>
    <location>
        <begin position="875"/>
        <end position="876"/>
    </location>
</feature>
<feature type="sequence variant" description="In strain: cv. Landsberg erecta.">
    <original>R</original>
    <variation>G</variation>
    <location>
        <position position="877"/>
    </location>
</feature>
<feature type="sequence variant" description="In strain: cv. Kas-0 and cv. Landsberg erecta.">
    <original>T</original>
    <variation>S</variation>
    <location>
        <position position="881"/>
    </location>
</feature>
<feature type="sequence conflict" description="In Ref. 5; AAB61689." evidence="3" ref="5">
    <original>K</original>
    <variation>E</variation>
    <location>
        <position position="242"/>
    </location>
</feature>
<feature type="sequence conflict" description="In Ref. 5; AAB61689." evidence="3" ref="5">
    <original>R</original>
    <variation>K</variation>
    <location>
        <position position="257"/>
    </location>
</feature>
<feature type="sequence conflict" description="In Ref. 5; AAB61689." evidence="3" ref="5">
    <original>K</original>
    <variation>I</variation>
    <location>
        <position position="325"/>
    </location>
</feature>
<feature type="sequence conflict" description="In Ref. 5; AAB61691." evidence="3" ref="5">
    <original>H</original>
    <variation>P</variation>
    <location>
        <position position="334"/>
    </location>
</feature>
<feature type="sequence conflict" description="In Ref. 5; AAB61689." evidence="3" ref="5">
    <original>K</original>
    <variation>E</variation>
    <location>
        <position position="343"/>
    </location>
</feature>
<accession>Q8L3R3</accession>
<accession>O04667</accession>
<accession>O04669</accession>
<accession>O81401</accession>
<accession>Q8L3Y7</accession>
<accession>Q8L4E2</accession>
<accession>Q8LGP3</accession>
<accession>Q8LGP4</accession>
<accession>Q8LGP7</accession>
<accession>Q8LGP8</accession>
<accession>Q8LGP9</accession>
<accession>Q8LGQ0</accession>
<evidence type="ECO:0000250" key="1"/>
<evidence type="ECO:0000255" key="2"/>
<evidence type="ECO:0000305" key="3"/>
<organism>
    <name type="scientific">Arabidopsis thaliana</name>
    <name type="common">Mouse-ear cress</name>
    <dbReference type="NCBI Taxonomy" id="3702"/>
    <lineage>
        <taxon>Eukaryota</taxon>
        <taxon>Viridiplantae</taxon>
        <taxon>Streptophyta</taxon>
        <taxon>Embryophyta</taxon>
        <taxon>Tracheophyta</taxon>
        <taxon>Spermatophyta</taxon>
        <taxon>Magnoliopsida</taxon>
        <taxon>eudicotyledons</taxon>
        <taxon>Gunneridae</taxon>
        <taxon>Pentapetalae</taxon>
        <taxon>rosids</taxon>
        <taxon>malvids</taxon>
        <taxon>Brassicales</taxon>
        <taxon>Brassicaceae</taxon>
        <taxon>Camelineae</taxon>
        <taxon>Arabidopsis</taxon>
    </lineage>
</organism>
<comment type="function">
    <text>Disease resistance (R) protein.</text>
</comment>
<comment type="domain">
    <text evidence="1">The LRR repeats probably act as specificity determinant of pathogen recognition.</text>
</comment>
<comment type="miscellaneous">
    <text>In contrast to RPS5, which is absent in cv. Landsberg erecta, RFL1 in present in both cv. Columbia and cv. Landsberg erecta.</text>
</comment>
<comment type="similarity">
    <text evidence="3">Belongs to the disease resistance NB-LRR family.</text>
</comment>
<comment type="online information" name="NIB-LRRS">
    <link uri="http://niblrrs.ucdavis.edu"/>
    <text>Functional and comparative genomics of disease resistance gene homologs</text>
</comment>
<keyword id="KW-0067">ATP-binding</keyword>
<keyword id="KW-0175">Coiled coil</keyword>
<keyword id="KW-0433">Leucine-rich repeat</keyword>
<keyword id="KW-0547">Nucleotide-binding</keyword>
<keyword id="KW-0611">Plant defense</keyword>
<keyword id="KW-1185">Reference proteome</keyword>
<keyword id="KW-0677">Repeat</keyword>
<protein>
    <recommendedName>
        <fullName>Disease resistance protein RFL1</fullName>
    </recommendedName>
    <alternativeName>
        <fullName>RPS5-like protein 1</fullName>
    </alternativeName>
    <alternativeName>
        <fullName>pNd13/pNd14</fullName>
    </alternativeName>
</protein>
<reference key="1">
    <citation type="journal article" date="1998" name="Plant Cell">
        <title>A mutation within the leucine-rich repeat domain of the Arabidopsis disease resistance gene RPS5 partially suppresses multiple bacterial and downy mildew resistance genes.</title>
        <authorList>
            <person name="Warren R.F."/>
            <person name="Henk A."/>
            <person name="Mowery P."/>
            <person name="Holub E."/>
            <person name="Innes R.W."/>
        </authorList>
    </citation>
    <scope>NUCLEOTIDE SEQUENCE [GENOMIC DNA]</scope>
    <source>
        <strain>cv. Columbia</strain>
    </source>
</reference>
<reference key="2">
    <citation type="journal article" date="2002" name="Proc. Natl. Acad. Sci. U.S.A.">
        <title>Signature of balancing selection in Arabidopsis.</title>
        <authorList>
            <person name="Tian D."/>
            <person name="Araki H."/>
            <person name="Stahl E."/>
            <person name="Bergelson J."/>
            <person name="Kreitman M."/>
        </authorList>
    </citation>
    <scope>NUCLEOTIDE SEQUENCE [GENOMIC DNA]</scope>
    <scope>VARIANTS</scope>
    <source>
        <strain>cv. Ang-0</strain>
        <strain>cv. Bla-1</strain>
        <strain>cv. Bur-0</strain>
        <strain>cv. Ct-1</strain>
        <strain>cv. Cvi-0</strain>
        <strain>cv. Kas-0</strain>
        <strain>cv. Landsberg erecta</strain>
        <strain>cv. Mt-0</strain>
        <strain>cv. Pog-0</strain>
        <strain>cv. Tamm-17</strain>
        <strain>cv. Tsu-0</strain>
        <strain>cv. Wu-0</strain>
    </source>
</reference>
<reference key="3">
    <citation type="journal article" date="2000" name="Nature">
        <title>Sequence and analysis of chromosome 1 of the plant Arabidopsis thaliana.</title>
        <authorList>
            <person name="Theologis A."/>
            <person name="Ecker J.R."/>
            <person name="Palm C.J."/>
            <person name="Federspiel N.A."/>
            <person name="Kaul S."/>
            <person name="White O."/>
            <person name="Alonso J."/>
            <person name="Altafi H."/>
            <person name="Araujo R."/>
            <person name="Bowman C.L."/>
            <person name="Brooks S.Y."/>
            <person name="Buehler E."/>
            <person name="Chan A."/>
            <person name="Chao Q."/>
            <person name="Chen H."/>
            <person name="Cheuk R.F."/>
            <person name="Chin C.W."/>
            <person name="Chung M.K."/>
            <person name="Conn L."/>
            <person name="Conway A.B."/>
            <person name="Conway A.R."/>
            <person name="Creasy T.H."/>
            <person name="Dewar K."/>
            <person name="Dunn P."/>
            <person name="Etgu P."/>
            <person name="Feldblyum T.V."/>
            <person name="Feng J.-D."/>
            <person name="Fong B."/>
            <person name="Fujii C.Y."/>
            <person name="Gill J.E."/>
            <person name="Goldsmith A.D."/>
            <person name="Haas B."/>
            <person name="Hansen N.F."/>
            <person name="Hughes B."/>
            <person name="Huizar L."/>
            <person name="Hunter J.L."/>
            <person name="Jenkins J."/>
            <person name="Johnson-Hopson C."/>
            <person name="Khan S."/>
            <person name="Khaykin E."/>
            <person name="Kim C.J."/>
            <person name="Koo H.L."/>
            <person name="Kremenetskaia I."/>
            <person name="Kurtz D.B."/>
            <person name="Kwan A."/>
            <person name="Lam B."/>
            <person name="Langin-Hooper S."/>
            <person name="Lee A."/>
            <person name="Lee J.M."/>
            <person name="Lenz C.A."/>
            <person name="Li J.H."/>
            <person name="Li Y.-P."/>
            <person name="Lin X."/>
            <person name="Liu S.X."/>
            <person name="Liu Z.A."/>
            <person name="Luros J.S."/>
            <person name="Maiti R."/>
            <person name="Marziali A."/>
            <person name="Militscher J."/>
            <person name="Miranda M."/>
            <person name="Nguyen M."/>
            <person name="Nierman W.C."/>
            <person name="Osborne B.I."/>
            <person name="Pai G."/>
            <person name="Peterson J."/>
            <person name="Pham P.K."/>
            <person name="Rizzo M."/>
            <person name="Rooney T."/>
            <person name="Rowley D."/>
            <person name="Sakano H."/>
            <person name="Salzberg S.L."/>
            <person name="Schwartz J.R."/>
            <person name="Shinn P."/>
            <person name="Southwick A.M."/>
            <person name="Sun H."/>
            <person name="Tallon L.J."/>
            <person name="Tambunga G."/>
            <person name="Toriumi M.J."/>
            <person name="Town C.D."/>
            <person name="Utterback T."/>
            <person name="Van Aken S."/>
            <person name="Vaysberg M."/>
            <person name="Vysotskaia V.S."/>
            <person name="Walker M."/>
            <person name="Wu D."/>
            <person name="Yu G."/>
            <person name="Fraser C.M."/>
            <person name="Venter J.C."/>
            <person name="Davis R.W."/>
        </authorList>
    </citation>
    <scope>NUCLEOTIDE SEQUENCE [LARGE SCALE GENOMIC DNA]</scope>
    <source>
        <strain>cv. Columbia</strain>
    </source>
</reference>
<reference key="4">
    <citation type="journal article" date="2017" name="Plant J.">
        <title>Araport11: a complete reannotation of the Arabidopsis thaliana reference genome.</title>
        <authorList>
            <person name="Cheng C.Y."/>
            <person name="Krishnakumar V."/>
            <person name="Chan A.P."/>
            <person name="Thibaud-Nissen F."/>
            <person name="Schobel S."/>
            <person name="Town C.D."/>
        </authorList>
    </citation>
    <scope>GENOME REANNOTATION</scope>
    <source>
        <strain>cv. Columbia</strain>
    </source>
</reference>
<reference key="5">
    <citation type="submission" date="1997-04" db="EMBL/GenBank/DDBJ databases">
        <title>Disease resistance gene homologous sequence.</title>
        <authorList>
            <person name="Speulman E."/>
            <person name="Beynon J."/>
        </authorList>
    </citation>
    <scope>NUCLEOTIDE SEQUENCE [GENOMIC DNA] OF 185-355</scope>
    <source>
        <strain>cv. Nd-1</strain>
    </source>
</reference>
<sequence>MGGCVSVSLSCDREVNQFSQWLCVSGSYIQNLSENLASLQKAMGVLNAKRDDVQGRINREEFTGHRRRLAQVQVWLTRIQTIENQFNDLLSTCNAEIQRLCLCGFCSKNVKMSYLYGKRVIVLLREVEGLSSQGVFDIVTEAAPIAEVEELPIQSTIVGQDSMLDKVWNCLMEDKVWIVGLYGMGGVGKTTLLTQINNKFSKLGGGFDVVIWVVVSKNATVHKIQKSIGEKLGLVGKNWDEKNKNQRALDIHNVLRRKKFVLLLDDIWEKVELKVIGVPYPSGENGCKVAFTTHSKEVCGRMGVDNPMEISCLDTGNAWDLLKKKVGENTLGSHPDIPQLARKVSEKCCGLPLALNVIGETMSFKRTIQEWRHATEVLTSATDFSGMEDEILPILKYSYDSLNGEDAKSCFLYCSLFPEDFEIRKEMLIEYWICEGFIKEKQGREKAFNQGYDILGTLVRSSLLLEGAKDKDVVSMHDMVREMALWIFSDLGKHKERCIVQAGIGLDELPEVENWRAVKRMSLMNNNFEKILGSPECVELITLFLQNNYKLVDISMEFFRCMPSLAVLDLSENHSLSELPEEISELVSLQYLDLSGTYIERLPHGLHELRKLVHLKLERTRRLESISGISYLSSLRTLRLRDSKTTLDTGLMKELQLLEHLELITTDISSGLVGELFCYPRVGRCIQHIYIRDHWERPEESVGVLVLPAIHNLCYISIWNCWMWEIMIEKTPWKKNLTNPNFSNLSNVRIEGCDGLKDLTWLLFAPNLINLRVWGCKHLEDIISKEKAASVLEKEILPFQKLECLNLYQLSELKSIYWNALPFQRLRCLDILNNCPKLRKLPLDSKSVVKVEEFVIKYKEKKWIERVEWEDEATQYRFLPTCRLR</sequence>
<dbReference type="EMBL" id="AF074916">
    <property type="protein sequence ID" value="AAC26125.1"/>
    <property type="molecule type" value="Genomic_DNA"/>
</dbReference>
<dbReference type="EMBL" id="AY062384">
    <property type="protein sequence ID" value="AAL65604.1"/>
    <property type="molecule type" value="Genomic_DNA"/>
</dbReference>
<dbReference type="EMBL" id="AY062385">
    <property type="protein sequence ID" value="AAL65606.1"/>
    <property type="molecule type" value="Genomic_DNA"/>
</dbReference>
<dbReference type="EMBL" id="AY062386">
    <property type="protein sequence ID" value="AAL65608.1"/>
    <property type="molecule type" value="Genomic_DNA"/>
</dbReference>
<dbReference type="EMBL" id="AY062387">
    <property type="protein sequence ID" value="AAL65610.1"/>
    <property type="molecule type" value="Genomic_DNA"/>
</dbReference>
<dbReference type="EMBL" id="AY062390">
    <property type="protein sequence ID" value="AAL65614.1"/>
    <property type="molecule type" value="Genomic_DNA"/>
</dbReference>
<dbReference type="EMBL" id="AY062391">
    <property type="protein sequence ID" value="AAL65616.1"/>
    <property type="molecule type" value="Genomic_DNA"/>
</dbReference>
<dbReference type="EMBL" id="AY062392">
    <property type="protein sequence ID" value="AAL65618.1"/>
    <property type="molecule type" value="Genomic_DNA"/>
</dbReference>
<dbReference type="EMBL" id="AY062394">
    <property type="protein sequence ID" value="AAL65621.1"/>
    <property type="molecule type" value="Genomic_DNA"/>
</dbReference>
<dbReference type="EMBL" id="AY062398">
    <property type="protein sequence ID" value="AAL65626.1"/>
    <property type="molecule type" value="Genomic_DNA"/>
</dbReference>
<dbReference type="EMBL" id="AY062399">
    <property type="protein sequence ID" value="AAL65628.1"/>
    <property type="molecule type" value="Genomic_DNA"/>
</dbReference>
<dbReference type="EMBL" id="AY062403">
    <property type="protein sequence ID" value="AAL65633.1"/>
    <property type="molecule type" value="Genomic_DNA"/>
</dbReference>
<dbReference type="EMBL" id="AY062404">
    <property type="protein sequence ID" value="AAL65635.1"/>
    <property type="molecule type" value="Genomic_DNA"/>
</dbReference>
<dbReference type="EMBL" id="AC022522">
    <property type="protein sequence ID" value="AAG12573.1"/>
    <property type="molecule type" value="Genomic_DNA"/>
</dbReference>
<dbReference type="EMBL" id="CP002684">
    <property type="protein sequence ID" value="AEE28849.1"/>
    <property type="molecule type" value="Genomic_DNA"/>
</dbReference>
<dbReference type="EMBL" id="U97224">
    <property type="protein sequence ID" value="AAB61689.1"/>
    <property type="molecule type" value="Genomic_DNA"/>
</dbReference>
<dbReference type="EMBL" id="U97226">
    <property type="protein sequence ID" value="AAB61691.1"/>
    <property type="molecule type" value="Genomic_DNA"/>
</dbReference>
<dbReference type="PIR" id="B86257">
    <property type="entry name" value="B86257"/>
</dbReference>
<dbReference type="RefSeq" id="NP_172685.1">
    <property type="nucleotide sequence ID" value="NM_101093.2"/>
</dbReference>
<dbReference type="SMR" id="Q8L3R3"/>
<dbReference type="STRING" id="3702.Q8L3R3"/>
<dbReference type="PaxDb" id="3702-AT1G12210.1"/>
<dbReference type="ProteomicsDB" id="236993"/>
<dbReference type="EnsemblPlants" id="AT1G12210.1">
    <property type="protein sequence ID" value="AT1G12210.1"/>
    <property type="gene ID" value="AT1G12210"/>
</dbReference>
<dbReference type="GeneID" id="837774"/>
<dbReference type="Gramene" id="AT1G12210.1">
    <property type="protein sequence ID" value="AT1G12210.1"/>
    <property type="gene ID" value="AT1G12210"/>
</dbReference>
<dbReference type="KEGG" id="ath:AT1G12210"/>
<dbReference type="Araport" id="AT1G12210"/>
<dbReference type="TAIR" id="AT1G12210">
    <property type="gene designation" value="RFL1"/>
</dbReference>
<dbReference type="eggNOG" id="KOG4658">
    <property type="taxonomic scope" value="Eukaryota"/>
</dbReference>
<dbReference type="HOGENOM" id="CLU_000427_4_0_1"/>
<dbReference type="InParanoid" id="Q8L3R3"/>
<dbReference type="OMA" id="LYICGHY"/>
<dbReference type="PhylomeDB" id="Q8L3R3"/>
<dbReference type="PRO" id="PR:Q8L3R3"/>
<dbReference type="Proteomes" id="UP000006548">
    <property type="component" value="Chromosome 1"/>
</dbReference>
<dbReference type="ExpressionAtlas" id="Q8L3R3">
    <property type="expression patterns" value="baseline and differential"/>
</dbReference>
<dbReference type="GO" id="GO:0043531">
    <property type="term" value="F:ADP binding"/>
    <property type="evidence" value="ECO:0007669"/>
    <property type="project" value="InterPro"/>
</dbReference>
<dbReference type="GO" id="GO:0005524">
    <property type="term" value="F:ATP binding"/>
    <property type="evidence" value="ECO:0007669"/>
    <property type="project" value="UniProtKB-KW"/>
</dbReference>
<dbReference type="GO" id="GO:0006952">
    <property type="term" value="P:defense response"/>
    <property type="evidence" value="ECO:0007669"/>
    <property type="project" value="UniProtKB-KW"/>
</dbReference>
<dbReference type="GO" id="GO:0009617">
    <property type="term" value="P:response to bacterium"/>
    <property type="evidence" value="ECO:0000250"/>
    <property type="project" value="TAIR"/>
</dbReference>
<dbReference type="FunFam" id="3.40.50.300:FF:001091">
    <property type="entry name" value="Probable disease resistance protein At1g61300"/>
    <property type="match status" value="1"/>
</dbReference>
<dbReference type="FunFam" id="1.10.10.10:FF:000322">
    <property type="entry name" value="Probable disease resistance protein At1g63360"/>
    <property type="match status" value="1"/>
</dbReference>
<dbReference type="FunFam" id="3.80.10.10:FF:002770">
    <property type="entry name" value="Probable disease resistance protein At5g47260"/>
    <property type="match status" value="1"/>
</dbReference>
<dbReference type="FunFam" id="1.10.8.430:FF:000003">
    <property type="entry name" value="Probable disease resistance protein At5g66910"/>
    <property type="match status" value="1"/>
</dbReference>
<dbReference type="Gene3D" id="1.10.8.430">
    <property type="entry name" value="Helical domain of apoptotic protease-activating factors"/>
    <property type="match status" value="1"/>
</dbReference>
<dbReference type="Gene3D" id="3.40.50.300">
    <property type="entry name" value="P-loop containing nucleotide triphosphate hydrolases"/>
    <property type="match status" value="1"/>
</dbReference>
<dbReference type="Gene3D" id="3.80.10.10">
    <property type="entry name" value="Ribonuclease Inhibitor"/>
    <property type="match status" value="2"/>
</dbReference>
<dbReference type="Gene3D" id="1.10.10.10">
    <property type="entry name" value="Winged helix-like DNA-binding domain superfamily/Winged helix DNA-binding domain"/>
    <property type="match status" value="1"/>
</dbReference>
<dbReference type="InterPro" id="IPR042197">
    <property type="entry name" value="Apaf_helical"/>
</dbReference>
<dbReference type="InterPro" id="IPR032675">
    <property type="entry name" value="LRR_dom_sf"/>
</dbReference>
<dbReference type="InterPro" id="IPR055414">
    <property type="entry name" value="LRR_R13L4/SHOC2-like"/>
</dbReference>
<dbReference type="InterPro" id="IPR002182">
    <property type="entry name" value="NB-ARC"/>
</dbReference>
<dbReference type="InterPro" id="IPR027417">
    <property type="entry name" value="P-loop_NTPase"/>
</dbReference>
<dbReference type="InterPro" id="IPR050905">
    <property type="entry name" value="Plant_NBS-LRR"/>
</dbReference>
<dbReference type="InterPro" id="IPR036388">
    <property type="entry name" value="WH-like_DNA-bd_sf"/>
</dbReference>
<dbReference type="PANTHER" id="PTHR33463:SF220">
    <property type="entry name" value="NB-ARC DOMAIN-CONTAINING PROTEIN"/>
    <property type="match status" value="1"/>
</dbReference>
<dbReference type="PANTHER" id="PTHR33463">
    <property type="entry name" value="NB-ARC DOMAIN-CONTAINING PROTEIN-RELATED"/>
    <property type="match status" value="1"/>
</dbReference>
<dbReference type="Pfam" id="PF23598">
    <property type="entry name" value="LRR_14"/>
    <property type="match status" value="1"/>
</dbReference>
<dbReference type="Pfam" id="PF00931">
    <property type="entry name" value="NB-ARC"/>
    <property type="match status" value="1"/>
</dbReference>
<dbReference type="Pfam" id="PF23559">
    <property type="entry name" value="WH_DRP"/>
    <property type="match status" value="1"/>
</dbReference>
<dbReference type="PRINTS" id="PR00364">
    <property type="entry name" value="DISEASERSIST"/>
</dbReference>
<dbReference type="SUPFAM" id="SSF52058">
    <property type="entry name" value="L domain-like"/>
    <property type="match status" value="1"/>
</dbReference>
<dbReference type="SUPFAM" id="SSF52540">
    <property type="entry name" value="P-loop containing nucleoside triphosphate hydrolases"/>
    <property type="match status" value="1"/>
</dbReference>
<gene>
    <name type="primary">RFL1</name>
    <name type="ordered locus">At1g12210</name>
    <name type="ORF">T28K15.6</name>
</gene>
<name>RFL1_ARATH</name>
<proteinExistence type="inferred from homology"/>